<organism>
    <name type="scientific">Stutzerimonas stutzeri (strain A1501)</name>
    <name type="common">Pseudomonas stutzeri</name>
    <dbReference type="NCBI Taxonomy" id="379731"/>
    <lineage>
        <taxon>Bacteria</taxon>
        <taxon>Pseudomonadati</taxon>
        <taxon>Pseudomonadota</taxon>
        <taxon>Gammaproteobacteria</taxon>
        <taxon>Pseudomonadales</taxon>
        <taxon>Pseudomonadaceae</taxon>
        <taxon>Stutzerimonas</taxon>
    </lineage>
</organism>
<comment type="function">
    <text evidence="1">Required for maturation of 30S ribosomal subunits.</text>
</comment>
<comment type="subcellular location">
    <subcellularLocation>
        <location evidence="1">Cytoplasm</location>
    </subcellularLocation>
</comment>
<comment type="similarity">
    <text evidence="1">Belongs to the RimP family.</text>
</comment>
<comment type="sequence caution" evidence="2">
    <conflict type="erroneous initiation">
        <sequence resource="EMBL-CDS" id="ABP80943"/>
    </conflict>
</comment>
<evidence type="ECO:0000255" key="1">
    <source>
        <dbReference type="HAMAP-Rule" id="MF_01077"/>
    </source>
</evidence>
<evidence type="ECO:0000305" key="2"/>
<dbReference type="EMBL" id="CP000304">
    <property type="protein sequence ID" value="ABP80943.1"/>
    <property type="status" value="ALT_INIT"/>
    <property type="molecule type" value="Genomic_DNA"/>
</dbReference>
<dbReference type="RefSeq" id="WP_013983874.1">
    <property type="nucleotide sequence ID" value="NC_009434.1"/>
</dbReference>
<dbReference type="SMR" id="A4VPP2"/>
<dbReference type="GeneID" id="66822709"/>
<dbReference type="KEGG" id="psa:PST_3312"/>
<dbReference type="eggNOG" id="COG0779">
    <property type="taxonomic scope" value="Bacteria"/>
</dbReference>
<dbReference type="HOGENOM" id="CLU_070525_1_1_6"/>
<dbReference type="Proteomes" id="UP000000233">
    <property type="component" value="Chromosome"/>
</dbReference>
<dbReference type="GO" id="GO:0005829">
    <property type="term" value="C:cytosol"/>
    <property type="evidence" value="ECO:0007669"/>
    <property type="project" value="TreeGrafter"/>
</dbReference>
<dbReference type="GO" id="GO:0000028">
    <property type="term" value="P:ribosomal small subunit assembly"/>
    <property type="evidence" value="ECO:0007669"/>
    <property type="project" value="TreeGrafter"/>
</dbReference>
<dbReference type="GO" id="GO:0006412">
    <property type="term" value="P:translation"/>
    <property type="evidence" value="ECO:0007669"/>
    <property type="project" value="TreeGrafter"/>
</dbReference>
<dbReference type="CDD" id="cd01734">
    <property type="entry name" value="YlxS_C"/>
    <property type="match status" value="1"/>
</dbReference>
<dbReference type="FunFam" id="3.30.300.70:FF:000001">
    <property type="entry name" value="Ribosome maturation factor RimP"/>
    <property type="match status" value="1"/>
</dbReference>
<dbReference type="Gene3D" id="2.30.30.180">
    <property type="entry name" value="Ribosome maturation factor RimP, C-terminal domain"/>
    <property type="match status" value="1"/>
</dbReference>
<dbReference type="Gene3D" id="3.30.300.70">
    <property type="entry name" value="RimP-like superfamily, N-terminal"/>
    <property type="match status" value="1"/>
</dbReference>
<dbReference type="HAMAP" id="MF_01077">
    <property type="entry name" value="RimP"/>
    <property type="match status" value="1"/>
</dbReference>
<dbReference type="InterPro" id="IPR003728">
    <property type="entry name" value="Ribosome_maturation_RimP"/>
</dbReference>
<dbReference type="InterPro" id="IPR028998">
    <property type="entry name" value="RimP_C"/>
</dbReference>
<dbReference type="InterPro" id="IPR036847">
    <property type="entry name" value="RimP_C_sf"/>
</dbReference>
<dbReference type="InterPro" id="IPR028989">
    <property type="entry name" value="RimP_N"/>
</dbReference>
<dbReference type="InterPro" id="IPR035956">
    <property type="entry name" value="RimP_N_sf"/>
</dbReference>
<dbReference type="NCBIfam" id="NF000927">
    <property type="entry name" value="PRK00092.1-1"/>
    <property type="match status" value="1"/>
</dbReference>
<dbReference type="PANTHER" id="PTHR33867">
    <property type="entry name" value="RIBOSOME MATURATION FACTOR RIMP"/>
    <property type="match status" value="1"/>
</dbReference>
<dbReference type="PANTHER" id="PTHR33867:SF1">
    <property type="entry name" value="RIBOSOME MATURATION FACTOR RIMP"/>
    <property type="match status" value="1"/>
</dbReference>
<dbReference type="Pfam" id="PF17384">
    <property type="entry name" value="DUF150_C"/>
    <property type="match status" value="1"/>
</dbReference>
<dbReference type="Pfam" id="PF02576">
    <property type="entry name" value="RimP_N"/>
    <property type="match status" value="1"/>
</dbReference>
<dbReference type="SUPFAM" id="SSF74942">
    <property type="entry name" value="YhbC-like, C-terminal domain"/>
    <property type="match status" value="1"/>
</dbReference>
<dbReference type="SUPFAM" id="SSF75420">
    <property type="entry name" value="YhbC-like, N-terminal domain"/>
    <property type="match status" value="1"/>
</dbReference>
<proteinExistence type="inferred from homology"/>
<gene>
    <name evidence="1" type="primary">rimP</name>
    <name type="ordered locus">PST_3312</name>
</gene>
<accession>A4VPP2</accession>
<feature type="chain" id="PRO_0000384741" description="Ribosome maturation factor RimP">
    <location>
        <begin position="1"/>
        <end position="152"/>
    </location>
</feature>
<keyword id="KW-0963">Cytoplasm</keyword>
<keyword id="KW-1185">Reference proteome</keyword>
<keyword id="KW-0690">Ribosome biogenesis</keyword>
<name>RIMP_STUS1</name>
<reference key="1">
    <citation type="journal article" date="2008" name="Proc. Natl. Acad. Sci. U.S.A.">
        <title>Nitrogen fixation island and rhizosphere competence traits in the genome of root-associated Pseudomonas stutzeri A1501.</title>
        <authorList>
            <person name="Yan Y."/>
            <person name="Yang J."/>
            <person name="Dou Y."/>
            <person name="Chen M."/>
            <person name="Ping S."/>
            <person name="Peng J."/>
            <person name="Lu W."/>
            <person name="Zhang W."/>
            <person name="Yao Z."/>
            <person name="Li H."/>
            <person name="Liu W."/>
            <person name="He S."/>
            <person name="Geng L."/>
            <person name="Zhang X."/>
            <person name="Yang F."/>
            <person name="Yu H."/>
            <person name="Zhan Y."/>
            <person name="Li D."/>
            <person name="Lin Z."/>
            <person name="Wang Y."/>
            <person name="Elmerich C."/>
            <person name="Lin M."/>
            <person name="Jin Q."/>
        </authorList>
    </citation>
    <scope>NUCLEOTIDE SEQUENCE [LARGE SCALE GENOMIC DNA]</scope>
    <source>
        <strain>A1501</strain>
    </source>
</reference>
<sequence>MSSKLEQLQALLAPVVEALGYQCWGIEFISQGRHSLLRVYIDHANGILIDDCEKVSRQLSGVLDVEDPISVDYTLEVSSPGMDRPLFTIEQYVAHVGDQVKIKLRSPFEGRRNFQGLLRGVEEQDVVVLVDDHEYLLPIDMIDKANIIPRFD</sequence>
<protein>
    <recommendedName>
        <fullName evidence="1">Ribosome maturation factor RimP</fullName>
    </recommendedName>
</protein>